<name>BR2CB_RANDY</name>
<organism>
    <name type="scientific">Rana dybowskii</name>
    <name type="common">Dybovsky's frog</name>
    <name type="synonym">Korean brown frog</name>
    <dbReference type="NCBI Taxonomy" id="71582"/>
    <lineage>
        <taxon>Eukaryota</taxon>
        <taxon>Metazoa</taxon>
        <taxon>Chordata</taxon>
        <taxon>Craniata</taxon>
        <taxon>Vertebrata</taxon>
        <taxon>Euteleostomi</taxon>
        <taxon>Amphibia</taxon>
        <taxon>Batrachia</taxon>
        <taxon>Anura</taxon>
        <taxon>Neobatrachia</taxon>
        <taxon>Ranoidea</taxon>
        <taxon>Ranidae</taxon>
        <taxon>Rana</taxon>
        <taxon>Rana</taxon>
    </lineage>
</organism>
<proteinExistence type="evidence at protein level"/>
<feature type="peptide" id="PRO_0000354977" description="Brevinin-2CDYb" evidence="3">
    <location>
        <begin position="1"/>
        <end position="33"/>
    </location>
</feature>
<feature type="disulfide bond" evidence="1">
    <location>
        <begin position="27"/>
        <end position="33"/>
    </location>
</feature>
<protein>
    <recommendedName>
        <fullName evidence="4">Brevinin-2CDYb</fullName>
    </recommendedName>
</protein>
<reference key="1">
    <citation type="journal article" date="2009" name="Comp. Biochem. Physiol.">
        <title>Characterization of antimicrobial peptides isolated from the skin of the Chinese frog, Rana dybowskii.</title>
        <authorList>
            <person name="Jin L.-L."/>
            <person name="Li Q."/>
            <person name="Song S.-S."/>
            <person name="Feng K."/>
            <person name="Zhang D.-B."/>
            <person name="Wang Q.-Y."/>
            <person name="Chen Y.-H."/>
        </authorList>
    </citation>
    <scope>PROTEIN SEQUENCE</scope>
    <scope>SUBCELLULAR LOCATION</scope>
    <scope>TISSUE SPECIFICITY</scope>
    <source>
        <tissue>Skin secretion</tissue>
    </source>
</reference>
<evidence type="ECO:0000250" key="1">
    <source>
        <dbReference type="UniProtKB" id="P84114"/>
    </source>
</evidence>
<evidence type="ECO:0000255" key="2"/>
<evidence type="ECO:0000269" key="3">
    <source>
    </source>
</evidence>
<evidence type="ECO:0000303" key="4">
    <source>
    </source>
</evidence>
<evidence type="ECO:0000305" key="5"/>
<keyword id="KW-0878">Amphibian defense peptide</keyword>
<keyword id="KW-0044">Antibiotic</keyword>
<keyword id="KW-0929">Antimicrobial</keyword>
<keyword id="KW-0903">Direct protein sequencing</keyword>
<keyword id="KW-1015">Disulfide bond</keyword>
<keyword id="KW-0964">Secreted</keyword>
<accession>P86042</accession>
<comment type="function">
    <text evidence="1">Antimicrobial peptide.</text>
</comment>
<comment type="subcellular location">
    <subcellularLocation>
        <location evidence="3 5">Secreted</location>
    </subcellularLocation>
</comment>
<comment type="tissue specificity">
    <text evidence="3 5">Expressed by the skin glands.</text>
</comment>
<comment type="similarity">
    <text evidence="2">Belongs to the frog skin active peptide (FSAP) family. Brevinin subfamily.</text>
</comment>
<sequence>GLFSVVTGVLKAVGKNVAGSLLEQLKCKISGGC</sequence>
<dbReference type="SMR" id="P86042"/>
<dbReference type="GO" id="GO:0005576">
    <property type="term" value="C:extracellular region"/>
    <property type="evidence" value="ECO:0007669"/>
    <property type="project" value="UniProtKB-SubCell"/>
</dbReference>
<dbReference type="GO" id="GO:0042742">
    <property type="term" value="P:defense response to bacterium"/>
    <property type="evidence" value="ECO:0007669"/>
    <property type="project" value="UniProtKB-KW"/>
</dbReference>
<dbReference type="InterPro" id="IPR012521">
    <property type="entry name" value="Antimicrobial_frog_2"/>
</dbReference>
<dbReference type="Pfam" id="PF08023">
    <property type="entry name" value="Antimicrobial_2"/>
    <property type="match status" value="1"/>
</dbReference>